<proteinExistence type="inferred from homology"/>
<feature type="chain" id="PRO_1000126121" description="Malate dehydrogenase">
    <location>
        <begin position="1"/>
        <end position="312"/>
    </location>
</feature>
<feature type="active site" description="Proton acceptor" evidence="1">
    <location>
        <position position="180"/>
    </location>
</feature>
<feature type="binding site" evidence="1">
    <location>
        <begin position="12"/>
        <end position="17"/>
    </location>
    <ligand>
        <name>NAD(+)</name>
        <dbReference type="ChEBI" id="CHEBI:57540"/>
    </ligand>
</feature>
<feature type="binding site" evidence="1">
    <location>
        <position position="36"/>
    </location>
    <ligand>
        <name>NAD(+)</name>
        <dbReference type="ChEBI" id="CHEBI:57540"/>
    </ligand>
</feature>
<feature type="binding site" evidence="1">
    <location>
        <position position="87"/>
    </location>
    <ligand>
        <name>substrate</name>
    </ligand>
</feature>
<feature type="binding site" evidence="1">
    <location>
        <position position="93"/>
    </location>
    <ligand>
        <name>substrate</name>
    </ligand>
</feature>
<feature type="binding site" evidence="1">
    <location>
        <position position="100"/>
    </location>
    <ligand>
        <name>NAD(+)</name>
        <dbReference type="ChEBI" id="CHEBI:57540"/>
    </ligand>
</feature>
<feature type="binding site" evidence="1">
    <location>
        <begin position="123"/>
        <end position="125"/>
    </location>
    <ligand>
        <name>NAD(+)</name>
        <dbReference type="ChEBI" id="CHEBI:57540"/>
    </ligand>
</feature>
<feature type="binding site" evidence="1">
    <location>
        <position position="125"/>
    </location>
    <ligand>
        <name>substrate</name>
    </ligand>
</feature>
<feature type="binding site" evidence="1">
    <location>
        <position position="156"/>
    </location>
    <ligand>
        <name>substrate</name>
    </ligand>
</feature>
<feature type="modified residue" description="Phosphoserine" evidence="1">
    <location>
        <position position="149"/>
    </location>
</feature>
<comment type="function">
    <text evidence="1">Catalyzes the reversible oxidation of malate to oxaloacetate.</text>
</comment>
<comment type="catalytic activity">
    <reaction evidence="1">
        <text>(S)-malate + NAD(+) = oxaloacetate + NADH + H(+)</text>
        <dbReference type="Rhea" id="RHEA:21432"/>
        <dbReference type="ChEBI" id="CHEBI:15378"/>
        <dbReference type="ChEBI" id="CHEBI:15589"/>
        <dbReference type="ChEBI" id="CHEBI:16452"/>
        <dbReference type="ChEBI" id="CHEBI:57540"/>
        <dbReference type="ChEBI" id="CHEBI:57945"/>
        <dbReference type="EC" id="1.1.1.37"/>
    </reaction>
</comment>
<comment type="similarity">
    <text evidence="1">Belongs to the LDH/MDH superfamily. MDH type 3 family.</text>
</comment>
<organism>
    <name type="scientific">Bacillus cereus (strain AH820)</name>
    <dbReference type="NCBI Taxonomy" id="405535"/>
    <lineage>
        <taxon>Bacteria</taxon>
        <taxon>Bacillati</taxon>
        <taxon>Bacillota</taxon>
        <taxon>Bacilli</taxon>
        <taxon>Bacillales</taxon>
        <taxon>Bacillaceae</taxon>
        <taxon>Bacillus</taxon>
        <taxon>Bacillus cereus group</taxon>
    </lineage>
</organism>
<sequence>MTIKRKKVSVIGAGFTGATTAFLLAQKELADVVLVDIPQLENPTKGKALDMLEASPVQGFDANIIGTSDYADTADSDVVVITAGIARKPGMSRDDLVATNSKIMKSITRDIAKHSPNAIIVVLTNPVDAMTYSVFKEAGFPKERVIGQSGVLDTARFRTFIAQELNLSVKDITGFVLGGHGDDMVPLVRYSYAGGIPLETLIPKERLEAIVERTRKGGGEIVGLLGNGSAYYAPAASLVEMTEAILKDQRRVLPAIAYLEGEYGYSDLYLGVPVILGGNGIEKIIELELLADEKEALDRSVESVRNVMKVLV</sequence>
<accession>B7JRW5</accession>
<evidence type="ECO:0000255" key="1">
    <source>
        <dbReference type="HAMAP-Rule" id="MF_00487"/>
    </source>
</evidence>
<protein>
    <recommendedName>
        <fullName evidence="1">Malate dehydrogenase</fullName>
        <ecNumber evidence="1">1.1.1.37</ecNumber>
    </recommendedName>
</protein>
<reference key="1">
    <citation type="submission" date="2008-10" db="EMBL/GenBank/DDBJ databases">
        <title>Genome sequence of Bacillus cereus AH820.</title>
        <authorList>
            <person name="Dodson R.J."/>
            <person name="Durkin A.S."/>
            <person name="Rosovitz M.J."/>
            <person name="Rasko D.A."/>
            <person name="Hoffmaster A."/>
            <person name="Ravel J."/>
            <person name="Sutton G."/>
        </authorList>
    </citation>
    <scope>NUCLEOTIDE SEQUENCE [LARGE SCALE GENOMIC DNA]</scope>
    <source>
        <strain>AH820</strain>
    </source>
</reference>
<name>MDH_BACC0</name>
<keyword id="KW-0520">NAD</keyword>
<keyword id="KW-0560">Oxidoreductase</keyword>
<keyword id="KW-0597">Phosphoprotein</keyword>
<keyword id="KW-0816">Tricarboxylic acid cycle</keyword>
<dbReference type="EC" id="1.1.1.37" evidence="1"/>
<dbReference type="EMBL" id="CP001283">
    <property type="protein sequence ID" value="ACK88734.1"/>
    <property type="molecule type" value="Genomic_DNA"/>
</dbReference>
<dbReference type="RefSeq" id="WP_000153232.1">
    <property type="nucleotide sequence ID" value="NC_011773.1"/>
</dbReference>
<dbReference type="SMR" id="B7JRW5"/>
<dbReference type="GeneID" id="93006518"/>
<dbReference type="KEGG" id="bcu:BCAH820_4707"/>
<dbReference type="HOGENOM" id="CLU_045401_2_1_9"/>
<dbReference type="Proteomes" id="UP000001363">
    <property type="component" value="Chromosome"/>
</dbReference>
<dbReference type="GO" id="GO:0004459">
    <property type="term" value="F:L-lactate dehydrogenase activity"/>
    <property type="evidence" value="ECO:0007669"/>
    <property type="project" value="TreeGrafter"/>
</dbReference>
<dbReference type="GO" id="GO:0030060">
    <property type="term" value="F:L-malate dehydrogenase (NAD+) activity"/>
    <property type="evidence" value="ECO:0007669"/>
    <property type="project" value="UniProtKB-UniRule"/>
</dbReference>
<dbReference type="GO" id="GO:0006089">
    <property type="term" value="P:lactate metabolic process"/>
    <property type="evidence" value="ECO:0007669"/>
    <property type="project" value="TreeGrafter"/>
</dbReference>
<dbReference type="GO" id="GO:0006099">
    <property type="term" value="P:tricarboxylic acid cycle"/>
    <property type="evidence" value="ECO:0007669"/>
    <property type="project" value="UniProtKB-UniRule"/>
</dbReference>
<dbReference type="CDD" id="cd01339">
    <property type="entry name" value="LDH-like_MDH"/>
    <property type="match status" value="1"/>
</dbReference>
<dbReference type="FunFam" id="3.40.50.720:FF:000018">
    <property type="entry name" value="Malate dehydrogenase"/>
    <property type="match status" value="1"/>
</dbReference>
<dbReference type="FunFam" id="3.90.110.10:FF:000004">
    <property type="entry name" value="Malate dehydrogenase"/>
    <property type="match status" value="1"/>
</dbReference>
<dbReference type="Gene3D" id="3.90.110.10">
    <property type="entry name" value="Lactate dehydrogenase/glycoside hydrolase, family 4, C-terminal"/>
    <property type="match status" value="1"/>
</dbReference>
<dbReference type="Gene3D" id="3.40.50.720">
    <property type="entry name" value="NAD(P)-binding Rossmann-like Domain"/>
    <property type="match status" value="1"/>
</dbReference>
<dbReference type="HAMAP" id="MF_00487">
    <property type="entry name" value="Malate_dehydrog_3"/>
    <property type="match status" value="1"/>
</dbReference>
<dbReference type="InterPro" id="IPR001557">
    <property type="entry name" value="L-lactate/malate_DH"/>
</dbReference>
<dbReference type="InterPro" id="IPR022383">
    <property type="entry name" value="Lactate/malate_DH_C"/>
</dbReference>
<dbReference type="InterPro" id="IPR001236">
    <property type="entry name" value="Lactate/malate_DH_N"/>
</dbReference>
<dbReference type="InterPro" id="IPR015955">
    <property type="entry name" value="Lactate_DH/Glyco_Ohase_4_C"/>
</dbReference>
<dbReference type="InterPro" id="IPR011275">
    <property type="entry name" value="Malate_DH_type3"/>
</dbReference>
<dbReference type="InterPro" id="IPR036291">
    <property type="entry name" value="NAD(P)-bd_dom_sf"/>
</dbReference>
<dbReference type="NCBIfam" id="TIGR01763">
    <property type="entry name" value="MalateDH_bact"/>
    <property type="match status" value="1"/>
</dbReference>
<dbReference type="NCBIfam" id="NF004863">
    <property type="entry name" value="PRK06223.1"/>
    <property type="match status" value="1"/>
</dbReference>
<dbReference type="PANTHER" id="PTHR43128">
    <property type="entry name" value="L-2-HYDROXYCARBOXYLATE DEHYDROGENASE (NAD(P)(+))"/>
    <property type="match status" value="1"/>
</dbReference>
<dbReference type="PANTHER" id="PTHR43128:SF16">
    <property type="entry name" value="L-LACTATE DEHYDROGENASE"/>
    <property type="match status" value="1"/>
</dbReference>
<dbReference type="Pfam" id="PF02866">
    <property type="entry name" value="Ldh_1_C"/>
    <property type="match status" value="1"/>
</dbReference>
<dbReference type="Pfam" id="PF00056">
    <property type="entry name" value="Ldh_1_N"/>
    <property type="match status" value="1"/>
</dbReference>
<dbReference type="PIRSF" id="PIRSF000102">
    <property type="entry name" value="Lac_mal_DH"/>
    <property type="match status" value="1"/>
</dbReference>
<dbReference type="PRINTS" id="PR00086">
    <property type="entry name" value="LLDHDRGNASE"/>
</dbReference>
<dbReference type="SUPFAM" id="SSF56327">
    <property type="entry name" value="LDH C-terminal domain-like"/>
    <property type="match status" value="1"/>
</dbReference>
<dbReference type="SUPFAM" id="SSF51735">
    <property type="entry name" value="NAD(P)-binding Rossmann-fold domains"/>
    <property type="match status" value="1"/>
</dbReference>
<gene>
    <name evidence="1" type="primary">mdh</name>
    <name type="ordered locus">BCAH820_4707</name>
</gene>